<keyword id="KW-0963">Cytoplasm</keyword>
<keyword id="KW-0413">Isomerase</keyword>
<keyword id="KW-0627">Porphyrin biosynthesis</keyword>
<keyword id="KW-0663">Pyridoxal phosphate</keyword>
<feature type="chain" id="PRO_1000121913" description="Glutamate-1-semialdehyde 2,1-aminomutase">
    <location>
        <begin position="1"/>
        <end position="426"/>
    </location>
</feature>
<feature type="modified residue" description="N6-(pyridoxal phosphate)lysine" evidence="1">
    <location>
        <position position="265"/>
    </location>
</feature>
<name>GSA_SALA4</name>
<reference key="1">
    <citation type="journal article" date="2011" name="J. Bacteriol.">
        <title>Comparative genomics of 28 Salmonella enterica isolates: evidence for CRISPR-mediated adaptive sublineage evolution.</title>
        <authorList>
            <person name="Fricke W.F."/>
            <person name="Mammel M.K."/>
            <person name="McDermott P.F."/>
            <person name="Tartera C."/>
            <person name="White D.G."/>
            <person name="Leclerc J.E."/>
            <person name="Ravel J."/>
            <person name="Cebula T.A."/>
        </authorList>
    </citation>
    <scope>NUCLEOTIDE SEQUENCE [LARGE SCALE GENOMIC DNA]</scope>
    <source>
        <strain>SL483</strain>
    </source>
</reference>
<comment type="catalytic activity">
    <reaction evidence="1">
        <text>(S)-4-amino-5-oxopentanoate = 5-aminolevulinate</text>
        <dbReference type="Rhea" id="RHEA:14265"/>
        <dbReference type="ChEBI" id="CHEBI:57501"/>
        <dbReference type="ChEBI" id="CHEBI:356416"/>
        <dbReference type="EC" id="5.4.3.8"/>
    </reaction>
</comment>
<comment type="cofactor">
    <cofactor evidence="1">
        <name>pyridoxal 5'-phosphate</name>
        <dbReference type="ChEBI" id="CHEBI:597326"/>
    </cofactor>
</comment>
<comment type="pathway">
    <text evidence="1">Porphyrin-containing compound metabolism; protoporphyrin-IX biosynthesis; 5-aminolevulinate from L-glutamyl-tRNA(Glu): step 2/2.</text>
</comment>
<comment type="subunit">
    <text evidence="1">Homodimer.</text>
</comment>
<comment type="subcellular location">
    <subcellularLocation>
        <location evidence="1">Cytoplasm</location>
    </subcellularLocation>
</comment>
<comment type="similarity">
    <text evidence="1">Belongs to the class-III pyridoxal-phosphate-dependent aminotransferase family. HemL subfamily.</text>
</comment>
<evidence type="ECO:0000255" key="1">
    <source>
        <dbReference type="HAMAP-Rule" id="MF_00375"/>
    </source>
</evidence>
<gene>
    <name evidence="1" type="primary">hemL</name>
    <name type="ordered locus">SeAg_B0239</name>
</gene>
<organism>
    <name type="scientific">Salmonella agona (strain SL483)</name>
    <dbReference type="NCBI Taxonomy" id="454166"/>
    <lineage>
        <taxon>Bacteria</taxon>
        <taxon>Pseudomonadati</taxon>
        <taxon>Pseudomonadota</taxon>
        <taxon>Gammaproteobacteria</taxon>
        <taxon>Enterobacterales</taxon>
        <taxon>Enterobacteriaceae</taxon>
        <taxon>Salmonella</taxon>
    </lineage>
</organism>
<dbReference type="EC" id="5.4.3.8" evidence="1"/>
<dbReference type="EMBL" id="CP001138">
    <property type="protein sequence ID" value="ACH51149.1"/>
    <property type="molecule type" value="Genomic_DNA"/>
</dbReference>
<dbReference type="RefSeq" id="WP_000045270.1">
    <property type="nucleotide sequence ID" value="NC_011149.1"/>
</dbReference>
<dbReference type="SMR" id="B5F8R5"/>
<dbReference type="KEGG" id="sea:SeAg_B0239"/>
<dbReference type="HOGENOM" id="CLU_016922_1_5_6"/>
<dbReference type="UniPathway" id="UPA00251">
    <property type="reaction ID" value="UER00317"/>
</dbReference>
<dbReference type="Proteomes" id="UP000008819">
    <property type="component" value="Chromosome"/>
</dbReference>
<dbReference type="GO" id="GO:0005737">
    <property type="term" value="C:cytoplasm"/>
    <property type="evidence" value="ECO:0007669"/>
    <property type="project" value="UniProtKB-SubCell"/>
</dbReference>
<dbReference type="GO" id="GO:0042286">
    <property type="term" value="F:glutamate-1-semialdehyde 2,1-aminomutase activity"/>
    <property type="evidence" value="ECO:0007669"/>
    <property type="project" value="UniProtKB-UniRule"/>
</dbReference>
<dbReference type="GO" id="GO:0030170">
    <property type="term" value="F:pyridoxal phosphate binding"/>
    <property type="evidence" value="ECO:0007669"/>
    <property type="project" value="InterPro"/>
</dbReference>
<dbReference type="GO" id="GO:0008483">
    <property type="term" value="F:transaminase activity"/>
    <property type="evidence" value="ECO:0007669"/>
    <property type="project" value="InterPro"/>
</dbReference>
<dbReference type="GO" id="GO:0006782">
    <property type="term" value="P:protoporphyrinogen IX biosynthetic process"/>
    <property type="evidence" value="ECO:0007669"/>
    <property type="project" value="UniProtKB-UniRule"/>
</dbReference>
<dbReference type="CDD" id="cd00610">
    <property type="entry name" value="OAT_like"/>
    <property type="match status" value="1"/>
</dbReference>
<dbReference type="FunFam" id="3.40.640.10:FF:000021">
    <property type="entry name" value="Glutamate-1-semialdehyde 2,1-aminomutase"/>
    <property type="match status" value="1"/>
</dbReference>
<dbReference type="FunFam" id="3.90.1150.10:FF:000012">
    <property type="entry name" value="Glutamate-1-semialdehyde 2,1-aminomutase"/>
    <property type="match status" value="1"/>
</dbReference>
<dbReference type="Gene3D" id="3.90.1150.10">
    <property type="entry name" value="Aspartate Aminotransferase, domain 1"/>
    <property type="match status" value="1"/>
</dbReference>
<dbReference type="Gene3D" id="3.40.640.10">
    <property type="entry name" value="Type I PLP-dependent aspartate aminotransferase-like (Major domain)"/>
    <property type="match status" value="1"/>
</dbReference>
<dbReference type="HAMAP" id="MF_00375">
    <property type="entry name" value="HemL_aminotrans_3"/>
    <property type="match status" value="1"/>
</dbReference>
<dbReference type="InterPro" id="IPR004639">
    <property type="entry name" value="4pyrrol_synth_GluAld_NH2Trfase"/>
</dbReference>
<dbReference type="InterPro" id="IPR005814">
    <property type="entry name" value="Aminotrans_3"/>
</dbReference>
<dbReference type="InterPro" id="IPR049704">
    <property type="entry name" value="Aminotrans_3_PPA_site"/>
</dbReference>
<dbReference type="InterPro" id="IPR015424">
    <property type="entry name" value="PyrdxlP-dep_Trfase"/>
</dbReference>
<dbReference type="InterPro" id="IPR015421">
    <property type="entry name" value="PyrdxlP-dep_Trfase_major"/>
</dbReference>
<dbReference type="InterPro" id="IPR015422">
    <property type="entry name" value="PyrdxlP-dep_Trfase_small"/>
</dbReference>
<dbReference type="NCBIfam" id="TIGR00713">
    <property type="entry name" value="hemL"/>
    <property type="match status" value="1"/>
</dbReference>
<dbReference type="NCBIfam" id="NF000818">
    <property type="entry name" value="PRK00062.1"/>
    <property type="match status" value="1"/>
</dbReference>
<dbReference type="PANTHER" id="PTHR43713">
    <property type="entry name" value="GLUTAMATE-1-SEMIALDEHYDE 2,1-AMINOMUTASE"/>
    <property type="match status" value="1"/>
</dbReference>
<dbReference type="PANTHER" id="PTHR43713:SF3">
    <property type="entry name" value="GLUTAMATE-1-SEMIALDEHYDE 2,1-AMINOMUTASE 1, CHLOROPLASTIC-RELATED"/>
    <property type="match status" value="1"/>
</dbReference>
<dbReference type="Pfam" id="PF00202">
    <property type="entry name" value="Aminotran_3"/>
    <property type="match status" value="1"/>
</dbReference>
<dbReference type="SUPFAM" id="SSF53383">
    <property type="entry name" value="PLP-dependent transferases"/>
    <property type="match status" value="1"/>
</dbReference>
<dbReference type="PROSITE" id="PS00600">
    <property type="entry name" value="AA_TRANSFER_CLASS_3"/>
    <property type="match status" value="1"/>
</dbReference>
<proteinExistence type="inferred from homology"/>
<sequence>MSKSENLYSAARELIPGGVNSPVRAFTGVGGTPLFIEKADGAYLYDVDGKAYIDYVGSWGPMVLGHNHPAIRNAVIEAAERGLSFGAPTEMEVKMAELVTNLVPTMDMVRMVNSGTEATMSAIRLARGFTGRDKIIKFEGCYHGHADCLLVKAGSGALTLGQPNSPGVPADFAKHTLTCTYNNLASVRAAFEQYPQEIACIIVEPVAGNMNCVPPLPEFLPGLRALCDEFGALLIIDEVMTGFRVALAGAQDYYGVVPDLTCLGKIIGGGMPVGAFGGRRDVMDALAPTGPVYQAGTLSGNPIAMAAGFACLNEVAQPGIHETLDELTTRLAEGLLEAAEEANIPLVVNHVGGMFGIFFTDAESVTCYQDVMACDVERFKRFFHLMLEEGVYLAPSAFEAGFMSVAHSMDDINNTIDAARRVFATL</sequence>
<protein>
    <recommendedName>
        <fullName evidence="1">Glutamate-1-semialdehyde 2,1-aminomutase</fullName>
        <shortName evidence="1">GSA</shortName>
        <ecNumber evidence="1">5.4.3.8</ecNumber>
    </recommendedName>
    <alternativeName>
        <fullName evidence="1">Glutamate-1-semialdehyde aminotransferase</fullName>
        <shortName evidence="1">GSA-AT</shortName>
    </alternativeName>
</protein>
<accession>B5F8R5</accession>